<protein>
    <recommendedName>
        <fullName>Mediator of RNA polymerase II transcription subunit 21</fullName>
    </recommendedName>
    <alternativeName>
        <fullName>Mediator complex subunit 21</fullName>
    </alternativeName>
</protein>
<dbReference type="EMBL" id="CH477694">
    <property type="protein sequence ID" value="EAT37178.1"/>
    <property type="molecule type" value="Genomic_DNA"/>
</dbReference>
<dbReference type="SMR" id="Q16RX1"/>
<dbReference type="FunCoup" id="Q16RX1">
    <property type="interactions" value="1207"/>
</dbReference>
<dbReference type="STRING" id="7159.Q16RX1"/>
<dbReference type="PaxDb" id="7159-AAEL010797-PA"/>
<dbReference type="EnsemblMetazoa" id="AAEL010797-RA">
    <property type="protein sequence ID" value="AAEL010797-PA"/>
    <property type="gene ID" value="AAEL010797"/>
</dbReference>
<dbReference type="GeneID" id="5573881"/>
<dbReference type="KEGG" id="aag:5573881"/>
<dbReference type="CTD" id="9412"/>
<dbReference type="VEuPathDB" id="VectorBase:AAEL010797"/>
<dbReference type="eggNOG" id="KOG1510">
    <property type="taxonomic scope" value="Eukaryota"/>
</dbReference>
<dbReference type="HOGENOM" id="CLU_126757_0_0_1"/>
<dbReference type="InParanoid" id="Q16RX1"/>
<dbReference type="OMA" id="DSFPIEA"/>
<dbReference type="OrthoDB" id="526653at2759"/>
<dbReference type="PhylomeDB" id="Q16RX1"/>
<dbReference type="Proteomes" id="UP000008820">
    <property type="component" value="Chromosome 3"/>
</dbReference>
<dbReference type="Proteomes" id="UP000682892">
    <property type="component" value="Unassembled WGS sequence"/>
</dbReference>
<dbReference type="GO" id="GO:0016592">
    <property type="term" value="C:mediator complex"/>
    <property type="evidence" value="ECO:0007669"/>
    <property type="project" value="InterPro"/>
</dbReference>
<dbReference type="GO" id="GO:0003712">
    <property type="term" value="F:transcription coregulator activity"/>
    <property type="evidence" value="ECO:0007669"/>
    <property type="project" value="TreeGrafter"/>
</dbReference>
<dbReference type="GO" id="GO:0006357">
    <property type="term" value="P:regulation of transcription by RNA polymerase II"/>
    <property type="evidence" value="ECO:0007669"/>
    <property type="project" value="TreeGrafter"/>
</dbReference>
<dbReference type="Gene3D" id="6.10.280.10">
    <property type="entry name" value="Mediator complex, subunit Med21"/>
    <property type="match status" value="1"/>
</dbReference>
<dbReference type="InterPro" id="IPR037212">
    <property type="entry name" value="Med7/Med21-like"/>
</dbReference>
<dbReference type="InterPro" id="IPR021384">
    <property type="entry name" value="Mediator_Med21"/>
</dbReference>
<dbReference type="PANTHER" id="PTHR13381:SF0">
    <property type="entry name" value="MEDIATOR OF RNA POLYMERASE II TRANSCRIPTION SUBUNIT 21"/>
    <property type="match status" value="1"/>
</dbReference>
<dbReference type="PANTHER" id="PTHR13381">
    <property type="entry name" value="RNA POLYMERASE II HOLOENZYME COMPONENT SRB7"/>
    <property type="match status" value="1"/>
</dbReference>
<dbReference type="Pfam" id="PF11221">
    <property type="entry name" value="Med21"/>
    <property type="match status" value="1"/>
</dbReference>
<dbReference type="SUPFAM" id="SSF140718">
    <property type="entry name" value="Mediator hinge subcomplex-like"/>
    <property type="match status" value="1"/>
</dbReference>
<accession>Q16RX1</accession>
<reference key="1">
    <citation type="journal article" date="2007" name="Science">
        <title>Genome sequence of Aedes aegypti, a major arbovirus vector.</title>
        <authorList>
            <person name="Nene V."/>
            <person name="Wortman J.R."/>
            <person name="Lawson D."/>
            <person name="Haas B.J."/>
            <person name="Kodira C.D."/>
            <person name="Tu Z.J."/>
            <person name="Loftus B.J."/>
            <person name="Xi Z."/>
            <person name="Megy K."/>
            <person name="Grabherr M."/>
            <person name="Ren Q."/>
            <person name="Zdobnov E.M."/>
            <person name="Lobo N.F."/>
            <person name="Campbell K.S."/>
            <person name="Brown S.E."/>
            <person name="Bonaldo M.F."/>
            <person name="Zhu J."/>
            <person name="Sinkins S.P."/>
            <person name="Hogenkamp D.G."/>
            <person name="Amedeo P."/>
            <person name="Arensburger P."/>
            <person name="Atkinson P.W."/>
            <person name="Bidwell S.L."/>
            <person name="Biedler J."/>
            <person name="Birney E."/>
            <person name="Bruggner R.V."/>
            <person name="Costas J."/>
            <person name="Coy M.R."/>
            <person name="Crabtree J."/>
            <person name="Crawford M."/>
            <person name="DeBruyn B."/>
            <person name="DeCaprio D."/>
            <person name="Eiglmeier K."/>
            <person name="Eisenstadt E."/>
            <person name="El-Dorry H."/>
            <person name="Gelbart W.M."/>
            <person name="Gomes S.L."/>
            <person name="Hammond M."/>
            <person name="Hannick L.I."/>
            <person name="Hogan J.R."/>
            <person name="Holmes M.H."/>
            <person name="Jaffe D."/>
            <person name="Johnston S.J."/>
            <person name="Kennedy R.C."/>
            <person name="Koo H."/>
            <person name="Kravitz S."/>
            <person name="Kriventseva E.V."/>
            <person name="Kulp D."/>
            <person name="Labutti K."/>
            <person name="Lee E."/>
            <person name="Li S."/>
            <person name="Lovin D.D."/>
            <person name="Mao C."/>
            <person name="Mauceli E."/>
            <person name="Menck C.F."/>
            <person name="Miller J.R."/>
            <person name="Montgomery P."/>
            <person name="Mori A."/>
            <person name="Nascimento A.L."/>
            <person name="Naveira H.F."/>
            <person name="Nusbaum C."/>
            <person name="O'Leary S.B."/>
            <person name="Orvis J."/>
            <person name="Pertea M."/>
            <person name="Quesneville H."/>
            <person name="Reidenbach K.R."/>
            <person name="Rogers Y.-H.C."/>
            <person name="Roth C.W."/>
            <person name="Schneider J.R."/>
            <person name="Schatz M."/>
            <person name="Shumway M."/>
            <person name="Stanke M."/>
            <person name="Stinson E.O."/>
            <person name="Tubio J.M.C."/>
            <person name="Vanzee J.P."/>
            <person name="Verjovski-Almeida S."/>
            <person name="Werner D."/>
            <person name="White O.R."/>
            <person name="Wyder S."/>
            <person name="Zeng Q."/>
            <person name="Zhao Q."/>
            <person name="Zhao Y."/>
            <person name="Hill C.A."/>
            <person name="Raikhel A.S."/>
            <person name="Soares M.B."/>
            <person name="Knudson D.L."/>
            <person name="Lee N.H."/>
            <person name="Galagan J."/>
            <person name="Salzberg S.L."/>
            <person name="Paulsen I.T."/>
            <person name="Dimopoulos G."/>
            <person name="Collins F.H."/>
            <person name="Bruce B."/>
            <person name="Fraser-Liggett C.M."/>
            <person name="Severson D.W."/>
        </authorList>
    </citation>
    <scope>NUCLEOTIDE SEQUENCE [LARGE SCALE GENOMIC DNA]</scope>
    <source>
        <strain>LVPib12</strain>
    </source>
</reference>
<feature type="chain" id="PRO_0000305952" description="Mediator of RNA polymerase II transcription subunit 21">
    <location>
        <begin position="1"/>
        <end position="141"/>
    </location>
</feature>
<feature type="coiled-coil region" evidence="2">
    <location>
        <begin position="79"/>
        <end position="122"/>
    </location>
</feature>
<evidence type="ECO:0000250" key="1"/>
<evidence type="ECO:0000255" key="2"/>
<evidence type="ECO:0000305" key="3"/>
<name>MED21_AEDAE</name>
<gene>
    <name type="primary">MED21</name>
    <name type="ORF">AAEL010797</name>
</gene>
<comment type="function">
    <text evidence="1">Component of the Mediator complex, a coactivator involved in the regulated transcription of nearly all RNA polymerase II-dependent genes. Mediator functions as a bridge to convey information from gene-specific regulatory proteins to the basal RNA polymerase II transcription machinery. Mediator is recruited to promoters by direct interactions with regulatory proteins and serves as a scaffold for the assembly of a functional preinitiation complex with RNA polymerase II and the general transcription factors (By similarity).</text>
</comment>
<comment type="subunit">
    <text evidence="1">Component of the Mediator complex.</text>
</comment>
<comment type="subcellular location">
    <subcellularLocation>
        <location evidence="3">Nucleus</location>
    </subcellularLocation>
</comment>
<comment type="similarity">
    <text evidence="3">Belongs to the Mediator complex subunit 21 family.</text>
</comment>
<organism>
    <name type="scientific">Aedes aegypti</name>
    <name type="common">Yellowfever mosquito</name>
    <name type="synonym">Culex aegypti</name>
    <dbReference type="NCBI Taxonomy" id="7159"/>
    <lineage>
        <taxon>Eukaryota</taxon>
        <taxon>Metazoa</taxon>
        <taxon>Ecdysozoa</taxon>
        <taxon>Arthropoda</taxon>
        <taxon>Hexapoda</taxon>
        <taxon>Insecta</taxon>
        <taxon>Pterygota</taxon>
        <taxon>Neoptera</taxon>
        <taxon>Endopterygota</taxon>
        <taxon>Diptera</taxon>
        <taxon>Nematocera</taxon>
        <taxon>Culicoidea</taxon>
        <taxon>Culicidae</taxon>
        <taxon>Culicinae</taxon>
        <taxon>Aedini</taxon>
        <taxon>Aedes</taxon>
        <taxon>Stegomyia</taxon>
    </lineage>
</organism>
<sequence length="141" mass="15888">MADRLTQLQDTVNQQAEHFCNSIGILQQCSVPSKFPGFERTGSQTPQQNQQEDYAQLFSTLISRCAKDIDTLIESLPSEESSIELQVQALKRLEIENQESAEKLEEVVRKGELLLEKIQAALSDIAQSQLDMQYSSSPKKQ</sequence>
<keyword id="KW-0010">Activator</keyword>
<keyword id="KW-0175">Coiled coil</keyword>
<keyword id="KW-0539">Nucleus</keyword>
<keyword id="KW-1185">Reference proteome</keyword>
<keyword id="KW-0804">Transcription</keyword>
<keyword id="KW-0805">Transcription regulation</keyword>
<proteinExistence type="inferred from homology"/>